<sequence>MTEEQKKYEDAENLESKSENPEEASAEKSENGVEDLQAENEKLKKDLLYSKAEAQNTRRRLEKEKSEAIAYSVTGFARDMLSVADNMERALAAIPDDIKQDEKIKNLVTGIEMTGKELLNILQRHGIKRVESVGQKLDPNLHQAMIEIESEKPEGTVVQEMQAGYTIHDRLLRPAMVGVAKAQSGETKSA</sequence>
<gene>
    <name evidence="1" type="primary">grpE</name>
    <name type="ordered locus">ZMO0016</name>
</gene>
<organism>
    <name type="scientific">Zymomonas mobilis subsp. mobilis (strain ATCC 31821 / ZM4 / CP4)</name>
    <dbReference type="NCBI Taxonomy" id="264203"/>
    <lineage>
        <taxon>Bacteria</taxon>
        <taxon>Pseudomonadati</taxon>
        <taxon>Pseudomonadota</taxon>
        <taxon>Alphaproteobacteria</taxon>
        <taxon>Sphingomonadales</taxon>
        <taxon>Zymomonadaceae</taxon>
        <taxon>Zymomonas</taxon>
    </lineage>
</organism>
<comment type="function">
    <text evidence="1">Participates actively in the response to hyperosmotic and heat shock by preventing the aggregation of stress-denatured proteins, in association with DnaK and GrpE. It is the nucleotide exchange factor for DnaK and may function as a thermosensor. Unfolded proteins bind initially to DnaJ; upon interaction with the DnaJ-bound protein, DnaK hydrolyzes its bound ATP, resulting in the formation of a stable complex. GrpE releases ADP from DnaK; ATP binding to DnaK triggers the release of the substrate protein, thus completing the reaction cycle. Several rounds of ATP-dependent interactions between DnaJ, DnaK and GrpE are required for fully efficient folding.</text>
</comment>
<comment type="subunit">
    <text evidence="1">Homodimer.</text>
</comment>
<comment type="subcellular location">
    <subcellularLocation>
        <location evidence="1">Cytoplasm</location>
    </subcellularLocation>
</comment>
<comment type="similarity">
    <text evidence="1">Belongs to the GrpE family.</text>
</comment>
<keyword id="KW-0143">Chaperone</keyword>
<keyword id="KW-0963">Cytoplasm</keyword>
<keyword id="KW-1185">Reference proteome</keyword>
<keyword id="KW-0346">Stress response</keyword>
<protein>
    <recommendedName>
        <fullName evidence="1">Protein GrpE</fullName>
    </recommendedName>
    <alternativeName>
        <fullName evidence="1">HSP-70 cofactor</fullName>
    </alternativeName>
</protein>
<proteinExistence type="inferred from homology"/>
<dbReference type="EMBL" id="AE008692">
    <property type="protein sequence ID" value="AAV88640.1"/>
    <property type="molecule type" value="Genomic_DNA"/>
</dbReference>
<dbReference type="RefSeq" id="WP_011240004.1">
    <property type="nucleotide sequence ID" value="NZ_CP035711.1"/>
</dbReference>
<dbReference type="SMR" id="Q5NRL4"/>
<dbReference type="STRING" id="264203.ZMO0016"/>
<dbReference type="GeneID" id="79904714"/>
<dbReference type="KEGG" id="zmo:ZMO0016"/>
<dbReference type="eggNOG" id="COG0576">
    <property type="taxonomic scope" value="Bacteria"/>
</dbReference>
<dbReference type="HOGENOM" id="CLU_057217_5_2_5"/>
<dbReference type="Proteomes" id="UP000001173">
    <property type="component" value="Chromosome"/>
</dbReference>
<dbReference type="GO" id="GO:0005737">
    <property type="term" value="C:cytoplasm"/>
    <property type="evidence" value="ECO:0007669"/>
    <property type="project" value="UniProtKB-SubCell"/>
</dbReference>
<dbReference type="GO" id="GO:0000774">
    <property type="term" value="F:adenyl-nucleotide exchange factor activity"/>
    <property type="evidence" value="ECO:0007669"/>
    <property type="project" value="InterPro"/>
</dbReference>
<dbReference type="GO" id="GO:0042803">
    <property type="term" value="F:protein homodimerization activity"/>
    <property type="evidence" value="ECO:0007669"/>
    <property type="project" value="InterPro"/>
</dbReference>
<dbReference type="GO" id="GO:0051087">
    <property type="term" value="F:protein-folding chaperone binding"/>
    <property type="evidence" value="ECO:0007669"/>
    <property type="project" value="InterPro"/>
</dbReference>
<dbReference type="GO" id="GO:0051082">
    <property type="term" value="F:unfolded protein binding"/>
    <property type="evidence" value="ECO:0007669"/>
    <property type="project" value="TreeGrafter"/>
</dbReference>
<dbReference type="GO" id="GO:0006457">
    <property type="term" value="P:protein folding"/>
    <property type="evidence" value="ECO:0007669"/>
    <property type="project" value="InterPro"/>
</dbReference>
<dbReference type="CDD" id="cd00446">
    <property type="entry name" value="GrpE"/>
    <property type="match status" value="1"/>
</dbReference>
<dbReference type="FunFam" id="2.30.22.10:FF:000001">
    <property type="entry name" value="Protein GrpE"/>
    <property type="match status" value="1"/>
</dbReference>
<dbReference type="Gene3D" id="3.90.20.20">
    <property type="match status" value="1"/>
</dbReference>
<dbReference type="Gene3D" id="2.30.22.10">
    <property type="entry name" value="Head domain of nucleotide exchange factor GrpE"/>
    <property type="match status" value="1"/>
</dbReference>
<dbReference type="HAMAP" id="MF_01151">
    <property type="entry name" value="GrpE"/>
    <property type="match status" value="1"/>
</dbReference>
<dbReference type="InterPro" id="IPR000740">
    <property type="entry name" value="GrpE"/>
</dbReference>
<dbReference type="InterPro" id="IPR013805">
    <property type="entry name" value="GrpE_coiled_coil"/>
</dbReference>
<dbReference type="InterPro" id="IPR009012">
    <property type="entry name" value="GrpE_head"/>
</dbReference>
<dbReference type="NCBIfam" id="NF010738">
    <property type="entry name" value="PRK14140.1"/>
    <property type="match status" value="1"/>
</dbReference>
<dbReference type="NCBIfam" id="NF010739">
    <property type="entry name" value="PRK14141.1"/>
    <property type="match status" value="1"/>
</dbReference>
<dbReference type="PANTHER" id="PTHR21237">
    <property type="entry name" value="GRPE PROTEIN"/>
    <property type="match status" value="1"/>
</dbReference>
<dbReference type="PANTHER" id="PTHR21237:SF23">
    <property type="entry name" value="GRPE PROTEIN HOMOLOG, MITOCHONDRIAL"/>
    <property type="match status" value="1"/>
</dbReference>
<dbReference type="Pfam" id="PF01025">
    <property type="entry name" value="GrpE"/>
    <property type="match status" value="1"/>
</dbReference>
<dbReference type="PRINTS" id="PR00773">
    <property type="entry name" value="GRPEPROTEIN"/>
</dbReference>
<dbReference type="SUPFAM" id="SSF58014">
    <property type="entry name" value="Coiled-coil domain of nucleotide exchange factor GrpE"/>
    <property type="match status" value="1"/>
</dbReference>
<dbReference type="SUPFAM" id="SSF51064">
    <property type="entry name" value="Head domain of nucleotide exchange factor GrpE"/>
    <property type="match status" value="1"/>
</dbReference>
<dbReference type="PROSITE" id="PS01071">
    <property type="entry name" value="GRPE"/>
    <property type="match status" value="1"/>
</dbReference>
<name>GRPE_ZYMMO</name>
<feature type="chain" id="PRO_1000164232" description="Protein GrpE">
    <location>
        <begin position="1"/>
        <end position="190"/>
    </location>
</feature>
<feature type="region of interest" description="Disordered" evidence="2">
    <location>
        <begin position="1"/>
        <end position="39"/>
    </location>
</feature>
<feature type="compositionally biased region" description="Basic and acidic residues" evidence="2">
    <location>
        <begin position="1"/>
        <end position="31"/>
    </location>
</feature>
<reference key="1">
    <citation type="journal article" date="2005" name="Nat. Biotechnol.">
        <title>The genome sequence of the ethanologenic bacterium Zymomonas mobilis ZM4.</title>
        <authorList>
            <person name="Seo J.-S."/>
            <person name="Chong H."/>
            <person name="Park H.S."/>
            <person name="Yoon K.-O."/>
            <person name="Jung C."/>
            <person name="Kim J.J."/>
            <person name="Hong J.H."/>
            <person name="Kim H."/>
            <person name="Kim J.-H."/>
            <person name="Kil J.-I."/>
            <person name="Park C.J."/>
            <person name="Oh H.-M."/>
            <person name="Lee J.-S."/>
            <person name="Jin S.-J."/>
            <person name="Um H.-W."/>
            <person name="Lee H.-J."/>
            <person name="Oh S.-J."/>
            <person name="Kim J.Y."/>
            <person name="Kang H.L."/>
            <person name="Lee S.Y."/>
            <person name="Lee K.J."/>
            <person name="Kang H.S."/>
        </authorList>
    </citation>
    <scope>NUCLEOTIDE SEQUENCE [LARGE SCALE GENOMIC DNA]</scope>
    <source>
        <strain>ATCC 31821 / ZM4 / CP4</strain>
    </source>
</reference>
<evidence type="ECO:0000255" key="1">
    <source>
        <dbReference type="HAMAP-Rule" id="MF_01151"/>
    </source>
</evidence>
<evidence type="ECO:0000256" key="2">
    <source>
        <dbReference type="SAM" id="MobiDB-lite"/>
    </source>
</evidence>
<accession>Q5NRL4</accession>